<organism>
    <name type="scientific">Aspergillus clavatus (strain ATCC 1007 / CBS 513.65 / DSM 816 / NCTC 3887 / NRRL 1 / QM 1276 / 107)</name>
    <dbReference type="NCBI Taxonomy" id="344612"/>
    <lineage>
        <taxon>Eukaryota</taxon>
        <taxon>Fungi</taxon>
        <taxon>Dikarya</taxon>
        <taxon>Ascomycota</taxon>
        <taxon>Pezizomycotina</taxon>
        <taxon>Eurotiomycetes</taxon>
        <taxon>Eurotiomycetidae</taxon>
        <taxon>Eurotiales</taxon>
        <taxon>Aspergillaceae</taxon>
        <taxon>Aspergillus</taxon>
        <taxon>Aspergillus subgen. Fumigati</taxon>
    </lineage>
</organism>
<dbReference type="EC" id="1.-.-.-" evidence="4"/>
<dbReference type="EMBL" id="DS027057">
    <property type="protein sequence ID" value="EAW09122.1"/>
    <property type="molecule type" value="Genomic_DNA"/>
</dbReference>
<dbReference type="RefSeq" id="XP_001270548.1">
    <property type="nucleotide sequence ID" value="XM_001270547.1"/>
</dbReference>
<dbReference type="SMR" id="A1CLZ3"/>
<dbReference type="STRING" id="344612.A1CLZ3"/>
<dbReference type="GlyCosmos" id="A1CLZ3">
    <property type="glycosylation" value="2 sites, No reported glycans"/>
</dbReference>
<dbReference type="EnsemblFungi" id="EAW09122">
    <property type="protein sequence ID" value="EAW09122"/>
    <property type="gene ID" value="ACLA_078710"/>
</dbReference>
<dbReference type="GeneID" id="4702626"/>
<dbReference type="KEGG" id="act:ACLA_078710"/>
<dbReference type="VEuPathDB" id="FungiDB:ACLA_078710"/>
<dbReference type="eggNOG" id="KOG0158">
    <property type="taxonomic scope" value="Eukaryota"/>
</dbReference>
<dbReference type="HOGENOM" id="CLU_022195_0_0_1"/>
<dbReference type="OMA" id="DPNRFHF"/>
<dbReference type="OrthoDB" id="1844152at2759"/>
<dbReference type="Proteomes" id="UP000006701">
    <property type="component" value="Unassembled WGS sequence"/>
</dbReference>
<dbReference type="GO" id="GO:0020037">
    <property type="term" value="F:heme binding"/>
    <property type="evidence" value="ECO:0007669"/>
    <property type="project" value="InterPro"/>
</dbReference>
<dbReference type="GO" id="GO:0005506">
    <property type="term" value="F:iron ion binding"/>
    <property type="evidence" value="ECO:0007669"/>
    <property type="project" value="InterPro"/>
</dbReference>
<dbReference type="GO" id="GO:0004497">
    <property type="term" value="F:monooxygenase activity"/>
    <property type="evidence" value="ECO:0007669"/>
    <property type="project" value="UniProtKB-KW"/>
</dbReference>
<dbReference type="GO" id="GO:0016705">
    <property type="term" value="F:oxidoreductase activity, acting on paired donors, with incorporation or reduction of molecular oxygen"/>
    <property type="evidence" value="ECO:0007669"/>
    <property type="project" value="InterPro"/>
</dbReference>
<dbReference type="GO" id="GO:0009058">
    <property type="term" value="P:biosynthetic process"/>
    <property type="evidence" value="ECO:0007669"/>
    <property type="project" value="UniProtKB-ARBA"/>
</dbReference>
<dbReference type="GO" id="GO:0019748">
    <property type="term" value="P:secondary metabolic process"/>
    <property type="evidence" value="ECO:0007669"/>
    <property type="project" value="UniProtKB-ARBA"/>
</dbReference>
<dbReference type="CDD" id="cd11041">
    <property type="entry name" value="CYP503A1-like"/>
    <property type="match status" value="1"/>
</dbReference>
<dbReference type="Gene3D" id="1.10.630.10">
    <property type="entry name" value="Cytochrome P450"/>
    <property type="match status" value="1"/>
</dbReference>
<dbReference type="InterPro" id="IPR001128">
    <property type="entry name" value="Cyt_P450"/>
</dbReference>
<dbReference type="InterPro" id="IPR017972">
    <property type="entry name" value="Cyt_P450_CS"/>
</dbReference>
<dbReference type="InterPro" id="IPR002403">
    <property type="entry name" value="Cyt_P450_E_grp-IV"/>
</dbReference>
<dbReference type="InterPro" id="IPR036396">
    <property type="entry name" value="Cyt_P450_sf"/>
</dbReference>
<dbReference type="PANTHER" id="PTHR46206">
    <property type="entry name" value="CYTOCHROME P450"/>
    <property type="match status" value="1"/>
</dbReference>
<dbReference type="Pfam" id="PF00067">
    <property type="entry name" value="p450"/>
    <property type="match status" value="1"/>
</dbReference>
<dbReference type="PRINTS" id="PR00465">
    <property type="entry name" value="EP450IV"/>
</dbReference>
<dbReference type="SUPFAM" id="SSF48264">
    <property type="entry name" value="Cytochrome P450"/>
    <property type="match status" value="1"/>
</dbReference>
<dbReference type="PROSITE" id="PS00086">
    <property type="entry name" value="CYTOCHROME_P450"/>
    <property type="match status" value="1"/>
</dbReference>
<feature type="signal peptide" evidence="2">
    <location>
        <begin position="1"/>
        <end position="28"/>
    </location>
</feature>
<feature type="chain" id="PRO_0000438558" description="Cytochrome P450 monooxygenase ccsG">
    <location>
        <begin position="29"/>
        <end position="501"/>
    </location>
</feature>
<feature type="binding site" description="axial binding residue" evidence="1">
    <location>
        <position position="443"/>
    </location>
    <ligand>
        <name>heme</name>
        <dbReference type="ChEBI" id="CHEBI:30413"/>
    </ligand>
    <ligandPart>
        <name>Fe</name>
        <dbReference type="ChEBI" id="CHEBI:18248"/>
    </ligandPart>
</feature>
<feature type="glycosylation site" description="N-linked (GlcNAc...) asparagine" evidence="3">
    <location>
        <position position="115"/>
    </location>
</feature>
<feature type="glycosylation site" description="N-linked (GlcNAc...) asparagine" evidence="3">
    <location>
        <position position="154"/>
    </location>
</feature>
<keyword id="KW-0325">Glycoprotein</keyword>
<keyword id="KW-0349">Heme</keyword>
<keyword id="KW-0408">Iron</keyword>
<keyword id="KW-0479">Metal-binding</keyword>
<keyword id="KW-0503">Monooxygenase</keyword>
<keyword id="KW-0560">Oxidoreductase</keyword>
<keyword id="KW-1185">Reference proteome</keyword>
<keyword id="KW-0732">Signal</keyword>
<name>CCSG_ASPCL</name>
<comment type="function">
    <text evidence="4 5 6">Cytochrome P450 monooxygenase; part of the gene cluster that mediates the biosynthesis of a family of the mycotoxins cytochalasins E and K (PubMed:21983160). The hybrid PKS-NRPS synthetase ccsA and the enoyl reductase ccsC are responsible for fusion of phenylalanine with an octaketide backbone and subsequent release of the stable tetramic acid precursor (PubMed:21983160, PubMed:27551732). The polyketide synthase module (PKS) of the PKS-NRPS ccsA is responsible for the synthesis of the octaketide backbone (PubMed:21983160). The downstream nonribosomal peptide synthetase (NRPS) amidates the carboxyl end of the octaketide with a phenylalanine (PubMed:21983160). A reductase-like domain (R) at the C-terminus catalyzes the reductive release of the polyketide-amino acid intermediate (PubMed:21983160). Because ccsA lacks a designated enoylreductase (ER) domain, the required activity is provided the enoyl reductase ccsC (PubMed:21983160, PubMed:27551732). Upon formation of the 11-membered carbocycle-fused perhydroisoindolone intermediate, a number of oxidative steps are required to afford the final cytochalasin E and K, including two hydroxylations at C17 and C18, one alcohol oxidation at C17, one epoxidation at C6 and C7 and two Baeyer-Villiger oxidations (PubMed:21983160). The oxidative modification at C17, C18 and the C6-C7 epoxidation are likely to be catalyzed by the two cytochrome P450 oxygenases ccsD and ccsG (PubMed:21983160). CcsD may be responsible for the epoxidation of the C6-C7 double bond (PubMed:21983160). CcsG may be responsible for the successive oxidative modifications at C17 and C18 (PubMed:21983160). The double Baeyer-Villiger oxidations of ketocytochalasin to precytochalasin and cytochalasin Z(16) are among the final steps leading to cytochalasin E and K and are catalyzed by ccsB (PubMed:21983160, PubMed:24838010). The first oxygen insertion step follows that of the classic BVMO mechanism, generating the ester precytochalasin (PubMed:24838010). Release of precytochalasin into an aqueous environment can generate the shunt product iso-precytochalasin through spontaneous isomerization (PubMed:24838010). Alternatively, precytochalasin can undergo further oxidation by ccsB to yield the in-line carbonate-containing cytochalasin Z(16) (PubMed:24838010). Cytochalasin Z(16) is a precursor to cytochalasin E and cytochalasin K, whereas iso-precytochalasin is a precursor to cytochalasin Z(17) and rosellichalasin (PubMed:21983160, PubMed:24838010). The hydrolyase ccsE may catalyze hydrolysis of epoxide bond in cytochalasin E to afford cytochalasin K (PubMed:21983160). The function of ccsF has not been assigned but it may play a role in post-PKS-NRPS biosynthetic step, resistance or transport of cytochalasins and related PKS-NRPS products (PubMed:21983160).</text>
</comment>
<comment type="cofactor">
    <cofactor evidence="1">
        <name>heme</name>
        <dbReference type="ChEBI" id="CHEBI:30413"/>
    </cofactor>
</comment>
<comment type="pathway">
    <text evidence="9">Mycotoxin biosynthesis.</text>
</comment>
<comment type="similarity">
    <text evidence="8">Belongs to the cytochrome P450 family.</text>
</comment>
<reference key="1">
    <citation type="journal article" date="2008" name="PLoS Genet.">
        <title>Genomic islands in the pathogenic filamentous fungus Aspergillus fumigatus.</title>
        <authorList>
            <person name="Fedorova N.D."/>
            <person name="Khaldi N."/>
            <person name="Joardar V.S."/>
            <person name="Maiti R."/>
            <person name="Amedeo P."/>
            <person name="Anderson M.J."/>
            <person name="Crabtree J."/>
            <person name="Silva J.C."/>
            <person name="Badger J.H."/>
            <person name="Albarraq A."/>
            <person name="Angiuoli S."/>
            <person name="Bussey H."/>
            <person name="Bowyer P."/>
            <person name="Cotty P.J."/>
            <person name="Dyer P.S."/>
            <person name="Egan A."/>
            <person name="Galens K."/>
            <person name="Fraser-Liggett C.M."/>
            <person name="Haas B.J."/>
            <person name="Inman J.M."/>
            <person name="Kent R."/>
            <person name="Lemieux S."/>
            <person name="Malavazi I."/>
            <person name="Orvis J."/>
            <person name="Roemer T."/>
            <person name="Ronning C.M."/>
            <person name="Sundaram J.P."/>
            <person name="Sutton G."/>
            <person name="Turner G."/>
            <person name="Venter J.C."/>
            <person name="White O.R."/>
            <person name="Whitty B.R."/>
            <person name="Youngman P."/>
            <person name="Wolfe K.H."/>
            <person name="Goldman G.H."/>
            <person name="Wortman J.R."/>
            <person name="Jiang B."/>
            <person name="Denning D.W."/>
            <person name="Nierman W.C."/>
        </authorList>
    </citation>
    <scope>NUCLEOTIDE SEQUENCE [LARGE SCALE GENOMIC DNA]</scope>
    <source>
        <strain>ATCC 1007 / CBS 513.65 / DSM 816 / NCTC 3887 / NRRL 1 / QM 1276 / 107</strain>
    </source>
</reference>
<reference key="2">
    <citation type="journal article" date="2011" name="Metab. Eng.">
        <title>Identification and engineering of the cytochalasin gene cluster from Aspergillus clavatus NRRL 1.</title>
        <authorList>
            <person name="Qiao K."/>
            <person name="Chooi Y.H."/>
            <person name="Tang Y."/>
        </authorList>
    </citation>
    <scope>FUNCTION</scope>
    <scope>PATHWAY</scope>
    <source>
        <strain>ATCC 1007 / CBS 513.65 / DSM 816 / NCTC 3887 / NRRL 1</strain>
    </source>
</reference>
<reference key="3">
    <citation type="journal article" date="2014" name="Nat. Chem. Biol.">
        <title>A carbonate-forming Baeyer-Villiger monooxygenase.</title>
        <authorList>
            <person name="Hu Y."/>
            <person name="Dietrich D."/>
            <person name="Xu W."/>
            <person name="Patel A."/>
            <person name="Thuss J.A."/>
            <person name="Wang J."/>
            <person name="Yin W.B."/>
            <person name="Qiao K."/>
            <person name="Houk K.N."/>
            <person name="Vederas J.C."/>
            <person name="Tang Y."/>
        </authorList>
    </citation>
    <scope>FUNCTION</scope>
    <source>
        <strain>ATCC 1007 / CBS 513.65 / DSM 816 / NCTC 3887 / NRRL 1</strain>
    </source>
</reference>
<reference key="4">
    <citation type="journal article" date="2016" name="PLoS ONE">
        <title>Linker flexibility facilitates module exchange in fungal hybrid PKS-NRPS engineering.</title>
        <authorList>
            <person name="Nielsen M.L."/>
            <person name="Isbrandt T."/>
            <person name="Petersen L.M."/>
            <person name="Mortensen U.H."/>
            <person name="Andersen M.R."/>
            <person name="Hoof J.B."/>
            <person name="Larsen T.O."/>
        </authorList>
    </citation>
    <scope>FUNCTION</scope>
</reference>
<gene>
    <name evidence="7" type="primary">ccsG</name>
    <name type="ORF">ACLA_078710</name>
</gene>
<sequence>MMITLFTLAVVSIGFFLWWLLTVQPAVTKRALKHIPELRFEDNDTPERYTQDSRSLLFRGYDKYLRHGIPFQMRHPIEELGPQVLLPMKYLDEVKYASTSLFSFPLFSEKVFLLNYSNAPRQTDAAAHVVRVDLTKNLGALANGMYQEAIEGLNQSLSASEEWNTLPAYDFLSSLTAQVTALALVGPELCRNREWIDISLQTTFAIFNAAFTIRSQYSPRWRWLARWQSDAPKRMRAMRARAVELLAPVYQDRLAAIKEHDFGAFADCLHWSLRGNGGETSLTRIAEQQLFLTVASMHTTSSTLTAVLFDLLIRPEYCAEITKEMQEALTECEGKWTLQEVAKMRKLDSFMKESQRVHPIGFITAQRMTVRPHTFKDGLHLPAGVIFQFPADAVHHDPAIYPRPDQFAGYRFLHLRETVDANRYHFASVSDTMLGFGAGSHACPGRFFTSLAIKLILVVLLTQYEVKLADCDGSRPANGFNDFNMGPSREATIMIRKRSGL</sequence>
<proteinExistence type="inferred from homology"/>
<accession>A1CLZ3</accession>
<protein>
    <recommendedName>
        <fullName evidence="7">Cytochrome P450 monooxygenase ccsG</fullName>
        <ecNumber evidence="4">1.-.-.-</ecNumber>
    </recommendedName>
    <alternativeName>
        <fullName evidence="7">Cytochalasin biosynthesis protein G</fullName>
    </alternativeName>
</protein>
<evidence type="ECO:0000250" key="1">
    <source>
        <dbReference type="UniProtKB" id="P04798"/>
    </source>
</evidence>
<evidence type="ECO:0000255" key="2"/>
<evidence type="ECO:0000255" key="3">
    <source>
        <dbReference type="PROSITE-ProRule" id="PRU00498"/>
    </source>
</evidence>
<evidence type="ECO:0000269" key="4">
    <source>
    </source>
</evidence>
<evidence type="ECO:0000269" key="5">
    <source>
    </source>
</evidence>
<evidence type="ECO:0000269" key="6">
    <source>
    </source>
</evidence>
<evidence type="ECO:0000303" key="7">
    <source>
    </source>
</evidence>
<evidence type="ECO:0000305" key="8"/>
<evidence type="ECO:0000305" key="9">
    <source>
    </source>
</evidence>